<proteinExistence type="inferred from homology"/>
<evidence type="ECO:0000255" key="1">
    <source>
        <dbReference type="HAMAP-Rule" id="MF_00435"/>
    </source>
</evidence>
<evidence type="ECO:0000255" key="2">
    <source>
        <dbReference type="PROSITE-ProRule" id="PRU01197"/>
    </source>
</evidence>
<evidence type="ECO:0000255" key="3">
    <source>
        <dbReference type="PROSITE-ProRule" id="PRU01198"/>
    </source>
</evidence>
<keyword id="KW-0028">Amino-acid biosynthesis</keyword>
<keyword id="KW-0100">Branched-chain amino acid biosynthesis</keyword>
<keyword id="KW-0460">Magnesium</keyword>
<keyword id="KW-0479">Metal-binding</keyword>
<keyword id="KW-0521">NADP</keyword>
<keyword id="KW-0560">Oxidoreductase</keyword>
<keyword id="KW-1185">Reference proteome</keyword>
<name>ILVC_METFK</name>
<comment type="function">
    <text evidence="1">Involved in the biosynthesis of branched-chain amino acids (BCAA). Catalyzes an alkyl-migration followed by a ketol-acid reduction of (S)-2-acetolactate (S2AL) to yield (R)-2,3-dihydroxy-isovalerate. In the isomerase reaction, S2AL is rearranged via a Mg-dependent methyl migration to produce 3-hydroxy-3-methyl-2-ketobutyrate (HMKB). In the reductase reaction, this 2-ketoacid undergoes a metal-dependent reduction by NADPH to yield (R)-2,3-dihydroxy-isovalerate.</text>
</comment>
<comment type="catalytic activity">
    <reaction evidence="1">
        <text>(2R)-2,3-dihydroxy-3-methylbutanoate + NADP(+) = (2S)-2-acetolactate + NADPH + H(+)</text>
        <dbReference type="Rhea" id="RHEA:22068"/>
        <dbReference type="ChEBI" id="CHEBI:15378"/>
        <dbReference type="ChEBI" id="CHEBI:49072"/>
        <dbReference type="ChEBI" id="CHEBI:57783"/>
        <dbReference type="ChEBI" id="CHEBI:58349"/>
        <dbReference type="ChEBI" id="CHEBI:58476"/>
        <dbReference type="EC" id="1.1.1.86"/>
    </reaction>
</comment>
<comment type="catalytic activity">
    <reaction evidence="1">
        <text>(2R,3R)-2,3-dihydroxy-3-methylpentanoate + NADP(+) = (S)-2-ethyl-2-hydroxy-3-oxobutanoate + NADPH + H(+)</text>
        <dbReference type="Rhea" id="RHEA:13493"/>
        <dbReference type="ChEBI" id="CHEBI:15378"/>
        <dbReference type="ChEBI" id="CHEBI:49256"/>
        <dbReference type="ChEBI" id="CHEBI:49258"/>
        <dbReference type="ChEBI" id="CHEBI:57783"/>
        <dbReference type="ChEBI" id="CHEBI:58349"/>
        <dbReference type="EC" id="1.1.1.86"/>
    </reaction>
</comment>
<comment type="cofactor">
    <cofactor evidence="1">
        <name>Mg(2+)</name>
        <dbReference type="ChEBI" id="CHEBI:18420"/>
    </cofactor>
    <text evidence="1">Binds 2 magnesium ions per subunit.</text>
</comment>
<comment type="pathway">
    <text evidence="1">Amino-acid biosynthesis; L-isoleucine biosynthesis; L-isoleucine from 2-oxobutanoate: step 2/4.</text>
</comment>
<comment type="pathway">
    <text evidence="1">Amino-acid biosynthesis; L-valine biosynthesis; L-valine from pyruvate: step 2/4.</text>
</comment>
<comment type="similarity">
    <text evidence="1">Belongs to the ketol-acid reductoisomerase family.</text>
</comment>
<gene>
    <name evidence="1" type="primary">ilvC</name>
    <name type="ordered locus">Mfla_2121</name>
</gene>
<accession>Q1GZE9</accession>
<organism>
    <name type="scientific">Methylobacillus flagellatus (strain ATCC 51484 / DSM 6875 / VKM B-1610 / KT)</name>
    <dbReference type="NCBI Taxonomy" id="265072"/>
    <lineage>
        <taxon>Bacteria</taxon>
        <taxon>Pseudomonadati</taxon>
        <taxon>Pseudomonadota</taxon>
        <taxon>Betaproteobacteria</taxon>
        <taxon>Nitrosomonadales</taxon>
        <taxon>Methylophilaceae</taxon>
        <taxon>Methylobacillus</taxon>
    </lineage>
</organism>
<protein>
    <recommendedName>
        <fullName evidence="1">Ketol-acid reductoisomerase (NADP(+))</fullName>
        <shortName evidence="1">KARI</shortName>
        <ecNumber evidence="1">1.1.1.86</ecNumber>
    </recommendedName>
    <alternativeName>
        <fullName evidence="1">Acetohydroxy-acid isomeroreductase</fullName>
        <shortName evidence="1">AHIR</shortName>
    </alternativeName>
    <alternativeName>
        <fullName evidence="1">Alpha-keto-beta-hydroxylacyl reductoisomerase</fullName>
    </alternativeName>
    <alternativeName>
        <fullName evidence="1">Ketol-acid reductoisomerase type 1</fullName>
    </alternativeName>
    <alternativeName>
        <fullName evidence="1">Ketol-acid reductoisomerase type I</fullName>
    </alternativeName>
</protein>
<reference key="1">
    <citation type="submission" date="2006-03" db="EMBL/GenBank/DDBJ databases">
        <title>Complete sequence of Methylobacillus flagellatus KT.</title>
        <authorList>
            <consortium name="US DOE Joint Genome Institute"/>
            <person name="Copeland A."/>
            <person name="Lucas S."/>
            <person name="Lapidus A."/>
            <person name="Barry K."/>
            <person name="Detter J.C."/>
            <person name="Glavina del Rio T."/>
            <person name="Hammon N."/>
            <person name="Israni S."/>
            <person name="Dalin E."/>
            <person name="Tice H."/>
            <person name="Pitluck S."/>
            <person name="Brettin T."/>
            <person name="Bruce D."/>
            <person name="Han C."/>
            <person name="Tapia R."/>
            <person name="Saunders E."/>
            <person name="Gilna P."/>
            <person name="Schmutz J."/>
            <person name="Larimer F."/>
            <person name="Land M."/>
            <person name="Kyrpides N."/>
            <person name="Anderson I."/>
            <person name="Richardson P."/>
        </authorList>
    </citation>
    <scope>NUCLEOTIDE SEQUENCE [LARGE SCALE GENOMIC DNA]</scope>
    <source>
        <strain>ATCC 51484 / DSM 6875 / VKM B-1610 / KT</strain>
    </source>
</reference>
<feature type="chain" id="PRO_0000252767" description="Ketol-acid reductoisomerase (NADP(+))">
    <location>
        <begin position="1"/>
        <end position="338"/>
    </location>
</feature>
<feature type="domain" description="KARI N-terminal Rossmann" evidence="2">
    <location>
        <begin position="1"/>
        <end position="181"/>
    </location>
</feature>
<feature type="domain" description="KARI C-terminal knotted" evidence="3">
    <location>
        <begin position="182"/>
        <end position="327"/>
    </location>
</feature>
<feature type="active site" evidence="1">
    <location>
        <position position="107"/>
    </location>
</feature>
<feature type="binding site" evidence="1">
    <location>
        <begin position="24"/>
        <end position="27"/>
    </location>
    <ligand>
        <name>NADP(+)</name>
        <dbReference type="ChEBI" id="CHEBI:58349"/>
    </ligand>
</feature>
<feature type="binding site" evidence="1">
    <location>
        <position position="47"/>
    </location>
    <ligand>
        <name>NADP(+)</name>
        <dbReference type="ChEBI" id="CHEBI:58349"/>
    </ligand>
</feature>
<feature type="binding site" evidence="1">
    <location>
        <position position="52"/>
    </location>
    <ligand>
        <name>NADP(+)</name>
        <dbReference type="ChEBI" id="CHEBI:58349"/>
    </ligand>
</feature>
<feature type="binding site" evidence="1">
    <location>
        <position position="133"/>
    </location>
    <ligand>
        <name>NADP(+)</name>
        <dbReference type="ChEBI" id="CHEBI:58349"/>
    </ligand>
</feature>
<feature type="binding site" evidence="1">
    <location>
        <position position="190"/>
    </location>
    <ligand>
        <name>Mg(2+)</name>
        <dbReference type="ChEBI" id="CHEBI:18420"/>
        <label>1</label>
    </ligand>
</feature>
<feature type="binding site" evidence="1">
    <location>
        <position position="190"/>
    </location>
    <ligand>
        <name>Mg(2+)</name>
        <dbReference type="ChEBI" id="CHEBI:18420"/>
        <label>2</label>
    </ligand>
</feature>
<feature type="binding site" evidence="1">
    <location>
        <position position="194"/>
    </location>
    <ligand>
        <name>Mg(2+)</name>
        <dbReference type="ChEBI" id="CHEBI:18420"/>
        <label>1</label>
    </ligand>
</feature>
<feature type="binding site" evidence="1">
    <location>
        <position position="226"/>
    </location>
    <ligand>
        <name>Mg(2+)</name>
        <dbReference type="ChEBI" id="CHEBI:18420"/>
        <label>2</label>
    </ligand>
</feature>
<feature type="binding site" evidence="1">
    <location>
        <position position="230"/>
    </location>
    <ligand>
        <name>Mg(2+)</name>
        <dbReference type="ChEBI" id="CHEBI:18420"/>
        <label>2</label>
    </ligand>
</feature>
<feature type="binding site" evidence="1">
    <location>
        <position position="251"/>
    </location>
    <ligand>
        <name>substrate</name>
    </ligand>
</feature>
<sequence>MKVYYDKDADLSLIKKLKVTIVGYGSQGHAHAQNLKDSGVNVTIGARKEGSSFAKAVNAGHEVKEIKEAVTGADVVMVLLPDETMAEIYHAEIEPNLKKGAALAFAHGFNIHYNQIVPSKDLDVIMIAPKGPGHTVRSEYLKGGGVPSLIAVYQDASGKAKDIALSYAAANGGTKGGVIETNFREETETDLFGEQAVLCGGAVELVKAGFETLVEAGYAPEMAYFECLHELKLIVDLMYEGGIANMNYSISNNAEYGEYVTGPRVIADQARAAMKECLKNIQNGDYAKQFILEGRTGYPSMTARRRLNAAHPIEQVGSQLRAMMPWIAKNKLVDQSKN</sequence>
<dbReference type="EC" id="1.1.1.86" evidence="1"/>
<dbReference type="EMBL" id="CP000284">
    <property type="protein sequence ID" value="ABE50388.1"/>
    <property type="molecule type" value="Genomic_DNA"/>
</dbReference>
<dbReference type="RefSeq" id="WP_011480342.1">
    <property type="nucleotide sequence ID" value="NC_007947.1"/>
</dbReference>
<dbReference type="SMR" id="Q1GZE9"/>
<dbReference type="STRING" id="265072.Mfla_2121"/>
<dbReference type="KEGG" id="mfa:Mfla_2121"/>
<dbReference type="eggNOG" id="COG0059">
    <property type="taxonomic scope" value="Bacteria"/>
</dbReference>
<dbReference type="HOGENOM" id="CLU_033821_0_1_4"/>
<dbReference type="OrthoDB" id="9804088at2"/>
<dbReference type="UniPathway" id="UPA00047">
    <property type="reaction ID" value="UER00056"/>
</dbReference>
<dbReference type="UniPathway" id="UPA00049">
    <property type="reaction ID" value="UER00060"/>
</dbReference>
<dbReference type="Proteomes" id="UP000002440">
    <property type="component" value="Chromosome"/>
</dbReference>
<dbReference type="GO" id="GO:0005829">
    <property type="term" value="C:cytosol"/>
    <property type="evidence" value="ECO:0007669"/>
    <property type="project" value="TreeGrafter"/>
</dbReference>
<dbReference type="GO" id="GO:0004455">
    <property type="term" value="F:ketol-acid reductoisomerase activity"/>
    <property type="evidence" value="ECO:0007669"/>
    <property type="project" value="UniProtKB-UniRule"/>
</dbReference>
<dbReference type="GO" id="GO:0000287">
    <property type="term" value="F:magnesium ion binding"/>
    <property type="evidence" value="ECO:0007669"/>
    <property type="project" value="UniProtKB-UniRule"/>
</dbReference>
<dbReference type="GO" id="GO:0050661">
    <property type="term" value="F:NADP binding"/>
    <property type="evidence" value="ECO:0007669"/>
    <property type="project" value="InterPro"/>
</dbReference>
<dbReference type="GO" id="GO:0009097">
    <property type="term" value="P:isoleucine biosynthetic process"/>
    <property type="evidence" value="ECO:0007669"/>
    <property type="project" value="UniProtKB-UniRule"/>
</dbReference>
<dbReference type="GO" id="GO:0009099">
    <property type="term" value="P:L-valine biosynthetic process"/>
    <property type="evidence" value="ECO:0007669"/>
    <property type="project" value="UniProtKB-UniRule"/>
</dbReference>
<dbReference type="FunFam" id="3.40.50.720:FF:000023">
    <property type="entry name" value="Ketol-acid reductoisomerase (NADP(+))"/>
    <property type="match status" value="1"/>
</dbReference>
<dbReference type="Gene3D" id="6.10.240.10">
    <property type="match status" value="1"/>
</dbReference>
<dbReference type="Gene3D" id="3.40.50.720">
    <property type="entry name" value="NAD(P)-binding Rossmann-like Domain"/>
    <property type="match status" value="1"/>
</dbReference>
<dbReference type="HAMAP" id="MF_00435">
    <property type="entry name" value="IlvC"/>
    <property type="match status" value="1"/>
</dbReference>
<dbReference type="InterPro" id="IPR008927">
    <property type="entry name" value="6-PGluconate_DH-like_C_sf"/>
</dbReference>
<dbReference type="InterPro" id="IPR013023">
    <property type="entry name" value="KARI"/>
</dbReference>
<dbReference type="InterPro" id="IPR000506">
    <property type="entry name" value="KARI_C"/>
</dbReference>
<dbReference type="InterPro" id="IPR013116">
    <property type="entry name" value="KARI_N"/>
</dbReference>
<dbReference type="InterPro" id="IPR014359">
    <property type="entry name" value="KARI_prok"/>
</dbReference>
<dbReference type="InterPro" id="IPR036291">
    <property type="entry name" value="NAD(P)-bd_dom_sf"/>
</dbReference>
<dbReference type="NCBIfam" id="TIGR00465">
    <property type="entry name" value="ilvC"/>
    <property type="match status" value="1"/>
</dbReference>
<dbReference type="NCBIfam" id="NF004017">
    <property type="entry name" value="PRK05479.1"/>
    <property type="match status" value="1"/>
</dbReference>
<dbReference type="NCBIfam" id="NF009940">
    <property type="entry name" value="PRK13403.1"/>
    <property type="match status" value="1"/>
</dbReference>
<dbReference type="PANTHER" id="PTHR21371">
    <property type="entry name" value="KETOL-ACID REDUCTOISOMERASE, MITOCHONDRIAL"/>
    <property type="match status" value="1"/>
</dbReference>
<dbReference type="PANTHER" id="PTHR21371:SF1">
    <property type="entry name" value="KETOL-ACID REDUCTOISOMERASE, MITOCHONDRIAL"/>
    <property type="match status" value="1"/>
</dbReference>
<dbReference type="Pfam" id="PF01450">
    <property type="entry name" value="KARI_C"/>
    <property type="match status" value="1"/>
</dbReference>
<dbReference type="Pfam" id="PF07991">
    <property type="entry name" value="KARI_N"/>
    <property type="match status" value="1"/>
</dbReference>
<dbReference type="PIRSF" id="PIRSF000116">
    <property type="entry name" value="IlvC_gammaproteo"/>
    <property type="match status" value="1"/>
</dbReference>
<dbReference type="SUPFAM" id="SSF48179">
    <property type="entry name" value="6-phosphogluconate dehydrogenase C-terminal domain-like"/>
    <property type="match status" value="1"/>
</dbReference>
<dbReference type="SUPFAM" id="SSF51735">
    <property type="entry name" value="NAD(P)-binding Rossmann-fold domains"/>
    <property type="match status" value="1"/>
</dbReference>
<dbReference type="PROSITE" id="PS51851">
    <property type="entry name" value="KARI_C"/>
    <property type="match status" value="1"/>
</dbReference>
<dbReference type="PROSITE" id="PS51850">
    <property type="entry name" value="KARI_N"/>
    <property type="match status" value="1"/>
</dbReference>